<evidence type="ECO:0000255" key="1">
    <source>
        <dbReference type="HAMAP-Rule" id="MF_01365"/>
    </source>
</evidence>
<evidence type="ECO:0000305" key="2"/>
<organism>
    <name type="scientific">Mycoplasmoides gallisepticum (strain R(low / passage 15 / clone 2))</name>
    <name type="common">Mycoplasma gallisepticum</name>
    <dbReference type="NCBI Taxonomy" id="710127"/>
    <lineage>
        <taxon>Bacteria</taxon>
        <taxon>Bacillati</taxon>
        <taxon>Mycoplasmatota</taxon>
        <taxon>Mycoplasmoidales</taxon>
        <taxon>Mycoplasmoidaceae</taxon>
        <taxon>Mycoplasmoides</taxon>
    </lineage>
</organism>
<protein>
    <recommendedName>
        <fullName evidence="1">Large ribosomal subunit protein uL6</fullName>
    </recommendedName>
    <alternativeName>
        <fullName evidence="2">50S ribosomal protein L6</fullName>
    </alternativeName>
</protein>
<dbReference type="EMBL" id="AF036708">
    <property type="protein sequence ID" value="AAB95402.1"/>
    <property type="molecule type" value="Genomic_DNA"/>
</dbReference>
<dbReference type="EMBL" id="AE015450">
    <property type="protein sequence ID" value="AAP56416.1"/>
    <property type="molecule type" value="Genomic_DNA"/>
</dbReference>
<dbReference type="RefSeq" id="WP_011113295.1">
    <property type="nucleotide sequence ID" value="NC_004829.2"/>
</dbReference>
<dbReference type="SMR" id="O52347"/>
<dbReference type="GeneID" id="93509884"/>
<dbReference type="KEGG" id="mga:MGA_0734"/>
<dbReference type="HOGENOM" id="CLU_065464_1_2_14"/>
<dbReference type="OrthoDB" id="9805007at2"/>
<dbReference type="Proteomes" id="UP000001418">
    <property type="component" value="Chromosome"/>
</dbReference>
<dbReference type="GO" id="GO:0022625">
    <property type="term" value="C:cytosolic large ribosomal subunit"/>
    <property type="evidence" value="ECO:0007669"/>
    <property type="project" value="TreeGrafter"/>
</dbReference>
<dbReference type="GO" id="GO:0019843">
    <property type="term" value="F:rRNA binding"/>
    <property type="evidence" value="ECO:0007669"/>
    <property type="project" value="UniProtKB-UniRule"/>
</dbReference>
<dbReference type="GO" id="GO:0003735">
    <property type="term" value="F:structural constituent of ribosome"/>
    <property type="evidence" value="ECO:0007669"/>
    <property type="project" value="InterPro"/>
</dbReference>
<dbReference type="GO" id="GO:0002181">
    <property type="term" value="P:cytoplasmic translation"/>
    <property type="evidence" value="ECO:0007669"/>
    <property type="project" value="TreeGrafter"/>
</dbReference>
<dbReference type="FunFam" id="3.90.930.12:FF:000001">
    <property type="entry name" value="50S ribosomal protein L6"/>
    <property type="match status" value="1"/>
</dbReference>
<dbReference type="Gene3D" id="3.90.930.12">
    <property type="entry name" value="Ribosomal protein L6, alpha-beta domain"/>
    <property type="match status" value="2"/>
</dbReference>
<dbReference type="HAMAP" id="MF_01365_B">
    <property type="entry name" value="Ribosomal_uL6_B"/>
    <property type="match status" value="1"/>
</dbReference>
<dbReference type="InterPro" id="IPR000702">
    <property type="entry name" value="Ribosomal_uL6-like"/>
</dbReference>
<dbReference type="InterPro" id="IPR036789">
    <property type="entry name" value="Ribosomal_uL6-like_a/b-dom_sf"/>
</dbReference>
<dbReference type="InterPro" id="IPR020040">
    <property type="entry name" value="Ribosomal_uL6_a/b-dom"/>
</dbReference>
<dbReference type="InterPro" id="IPR019906">
    <property type="entry name" value="Ribosomal_uL6_bac-type"/>
</dbReference>
<dbReference type="InterPro" id="IPR002358">
    <property type="entry name" value="Ribosomal_uL6_CS"/>
</dbReference>
<dbReference type="NCBIfam" id="TIGR03654">
    <property type="entry name" value="L6_bact"/>
    <property type="match status" value="1"/>
</dbReference>
<dbReference type="PANTHER" id="PTHR11655">
    <property type="entry name" value="60S/50S RIBOSOMAL PROTEIN L6/L9"/>
    <property type="match status" value="1"/>
</dbReference>
<dbReference type="PANTHER" id="PTHR11655:SF14">
    <property type="entry name" value="LARGE RIBOSOMAL SUBUNIT PROTEIN UL6M"/>
    <property type="match status" value="1"/>
</dbReference>
<dbReference type="Pfam" id="PF00347">
    <property type="entry name" value="Ribosomal_L6"/>
    <property type="match status" value="2"/>
</dbReference>
<dbReference type="PIRSF" id="PIRSF002162">
    <property type="entry name" value="Ribosomal_L6"/>
    <property type="match status" value="1"/>
</dbReference>
<dbReference type="PRINTS" id="PR00059">
    <property type="entry name" value="RIBOSOMALL6"/>
</dbReference>
<dbReference type="SUPFAM" id="SSF56053">
    <property type="entry name" value="Ribosomal protein L6"/>
    <property type="match status" value="2"/>
</dbReference>
<dbReference type="PROSITE" id="PS00525">
    <property type="entry name" value="RIBOSOMAL_L6_1"/>
    <property type="match status" value="1"/>
</dbReference>
<proteinExistence type="inferred from homology"/>
<gene>
    <name evidence="1" type="primary">rplF</name>
    <name evidence="1" type="synonym">rpl6</name>
    <name type="ordered locus">MYCGA0660</name>
    <name type="ORF">MGA_0734</name>
</gene>
<name>RL6_MYCGA</name>
<reference key="1">
    <citation type="journal article" date="2000" name="Mol. Biol. (Mosk.)">
        <title>Determination and analysis of the nucleotide sequence of a segment of a Mycoplasma gallisepticum strain A5969 chromosome, containing operons S10 and rrn23-5.</title>
        <authorList>
            <person name="Skamrov A.V."/>
            <person name="Gol'dman M.A."/>
            <person name="Feoktistova E.S."/>
            <person name="Bibilashvili R.S."/>
        </authorList>
    </citation>
    <scope>NUCLEOTIDE SEQUENCE [GENOMIC DNA]</scope>
    <source>
        <strain>A5969Var.B</strain>
    </source>
</reference>
<reference key="2">
    <citation type="journal article" date="2003" name="Microbiology">
        <title>The complete genome sequence of the avian pathogen Mycoplasma gallisepticum strain R(low).</title>
        <authorList>
            <person name="Papazisi L."/>
            <person name="Gorton T.S."/>
            <person name="Kutish G."/>
            <person name="Markham P.F."/>
            <person name="Browning G.F."/>
            <person name="Nguyen D.K."/>
            <person name="Swartzell S."/>
            <person name="Madan A."/>
            <person name="Mahairas G."/>
            <person name="Geary S.J."/>
        </authorList>
    </citation>
    <scope>NUCLEOTIDE SEQUENCE [LARGE SCALE GENOMIC DNA]</scope>
    <source>
        <strain>R(low / passage 15 / clone 2)</strain>
    </source>
</reference>
<comment type="function">
    <text evidence="1">This protein binds to the 23S rRNA, and is important in its secondary structure. It is located near the subunit interface in the base of the L7/L12 stalk, and near the tRNA binding site of the peptidyltransferase center.</text>
</comment>
<comment type="subunit">
    <text evidence="1">Part of the 50S ribosomal subunit.</text>
</comment>
<comment type="similarity">
    <text evidence="1">Belongs to the universal ribosomal protein uL6 family.</text>
</comment>
<accession>O52347</accession>
<keyword id="KW-1185">Reference proteome</keyword>
<keyword id="KW-0687">Ribonucleoprotein</keyword>
<keyword id="KW-0689">Ribosomal protein</keyword>
<keyword id="KW-0694">RNA-binding</keyword>
<keyword id="KW-0699">rRNA-binding</keyword>
<feature type="chain" id="PRO_0000131058" description="Large ribosomal subunit protein uL6">
    <location>
        <begin position="1"/>
        <end position="183"/>
    </location>
</feature>
<feature type="sequence conflict" description="In Ref. 1; AAB95402." evidence="2" ref="1">
    <original>V</original>
    <variation>I</variation>
    <location>
        <position position="83"/>
    </location>
</feature>
<feature type="sequence conflict" description="In Ref. 1; AAB95402." evidence="2" ref="1">
    <original>D</original>
    <variation>G</variation>
    <location>
        <position position="102"/>
    </location>
</feature>
<sequence length="183" mass="20433">MSRIGNRVITVPSNVSVNQTKELLTVKGPLGQLDLKLKEGSKIKVNVENNEIRLTRGDELKQTKMLHGTYNALIKNALEGVTVGFKKELRLVGVGYRASLKDNVLNLQLGYSHPINLDIPKDLKVTVDKNTEITVSGIDKQKVGEFAIQIRKWRMPEPYKGKGVLYLNEQIIRKAGKTAEGKK</sequence>